<reference key="1">
    <citation type="journal article" date="2007" name="Nature">
        <title>Evolution of genes and genomes on the Drosophila phylogeny.</title>
        <authorList>
            <consortium name="Drosophila 12 genomes consortium"/>
        </authorList>
    </citation>
    <scope>NUCLEOTIDE SEQUENCE [LARGE SCALE GENOMIC DNA]</scope>
    <source>
        <strain>Rob3c / Tucson 14021-0248.25</strain>
    </source>
</reference>
<comment type="function">
    <text evidence="1">Catalyzes the radical-mediated insertion of two sulfur atoms into the C-6 and C-8 positions of the octanoyl moiety bound to the lipoyl domains of lipoate-dependent enzymes, thereby converting the octanoylated domains into lipoylated derivatives.</text>
</comment>
<comment type="catalytic activity">
    <reaction evidence="1">
        <text>[[Fe-S] cluster scaffold protein carrying a second [4Fe-4S](2+) cluster] + N(6)-octanoyl-L-lysyl-[protein] + 2 oxidized [2Fe-2S]-[ferredoxin] + 2 S-adenosyl-L-methionine + 4 H(+) = [[Fe-S] cluster scaffold protein] + N(6)-[(R)-dihydrolipoyl]-L-lysyl-[protein] + 4 Fe(3+) + 2 hydrogen sulfide + 2 5'-deoxyadenosine + 2 L-methionine + 2 reduced [2Fe-2S]-[ferredoxin]</text>
        <dbReference type="Rhea" id="RHEA:16585"/>
        <dbReference type="Rhea" id="RHEA-COMP:9928"/>
        <dbReference type="Rhea" id="RHEA-COMP:10000"/>
        <dbReference type="Rhea" id="RHEA-COMP:10001"/>
        <dbReference type="Rhea" id="RHEA-COMP:10475"/>
        <dbReference type="Rhea" id="RHEA-COMP:14568"/>
        <dbReference type="Rhea" id="RHEA-COMP:14569"/>
        <dbReference type="ChEBI" id="CHEBI:15378"/>
        <dbReference type="ChEBI" id="CHEBI:17319"/>
        <dbReference type="ChEBI" id="CHEBI:29034"/>
        <dbReference type="ChEBI" id="CHEBI:29919"/>
        <dbReference type="ChEBI" id="CHEBI:33722"/>
        <dbReference type="ChEBI" id="CHEBI:33737"/>
        <dbReference type="ChEBI" id="CHEBI:33738"/>
        <dbReference type="ChEBI" id="CHEBI:57844"/>
        <dbReference type="ChEBI" id="CHEBI:59789"/>
        <dbReference type="ChEBI" id="CHEBI:78809"/>
        <dbReference type="ChEBI" id="CHEBI:83100"/>
        <dbReference type="EC" id="2.8.1.8"/>
    </reaction>
</comment>
<comment type="cofactor">
    <cofactor evidence="1">
        <name>[4Fe-4S] cluster</name>
        <dbReference type="ChEBI" id="CHEBI:49883"/>
    </cofactor>
    <text evidence="1">Binds 2 [4Fe-4S] clusters per subunit. One cluster is coordinated with 3 cysteines and an exchangeable S-adenosyl-L-methionine.</text>
</comment>
<comment type="pathway">
    <text evidence="1">Protein modification; protein lipoylation via endogenous pathway; protein N(6)-(lipoyl)lysine from octanoyl-[acyl-carrier-protein]: step 2/2.</text>
</comment>
<comment type="subcellular location">
    <subcellularLocation>
        <location evidence="1">Mitochondrion</location>
    </subcellularLocation>
</comment>
<comment type="miscellaneous">
    <text evidence="1">This protein may be expected to contain an N-terminal transit peptide but none has been predicted.</text>
</comment>
<comment type="similarity">
    <text evidence="1">Belongs to the radical SAM superfamily. Lipoyl synthase family.</text>
</comment>
<evidence type="ECO:0000255" key="1">
    <source>
        <dbReference type="HAMAP-Rule" id="MF_03123"/>
    </source>
</evidence>
<evidence type="ECO:0000255" key="2">
    <source>
        <dbReference type="PROSITE-ProRule" id="PRU01266"/>
    </source>
</evidence>
<gene>
    <name evidence="1" type="primary">Las</name>
    <name type="ORF">GM22215</name>
</gene>
<dbReference type="EC" id="2.8.1.8" evidence="1"/>
<dbReference type="EMBL" id="CH480826">
    <property type="protein sequence ID" value="EDW44220.1"/>
    <property type="molecule type" value="Genomic_DNA"/>
</dbReference>
<dbReference type="RefSeq" id="XP_002040667.1">
    <property type="nucleotide sequence ID" value="XM_002040631.1"/>
</dbReference>
<dbReference type="SMR" id="B4IAA7"/>
<dbReference type="STRING" id="7238.B4IAA7"/>
<dbReference type="EnsemblMetazoa" id="FBtr0205200">
    <property type="protein sequence ID" value="FBpp0203692"/>
    <property type="gene ID" value="FBgn0177085"/>
</dbReference>
<dbReference type="EnsemblMetazoa" id="XM_002040631.2">
    <property type="protein sequence ID" value="XP_002040667.2"/>
    <property type="gene ID" value="LOC6616303"/>
</dbReference>
<dbReference type="GeneID" id="6616303"/>
<dbReference type="KEGG" id="dse:6616303"/>
<dbReference type="CTD" id="40259"/>
<dbReference type="HOGENOM" id="CLU_033144_1_0_1"/>
<dbReference type="OMA" id="PYCDIDF"/>
<dbReference type="PhylomeDB" id="B4IAA7"/>
<dbReference type="UniPathway" id="UPA00538">
    <property type="reaction ID" value="UER00593"/>
</dbReference>
<dbReference type="ChiTaRS" id="Las">
    <property type="organism name" value="fly"/>
</dbReference>
<dbReference type="Proteomes" id="UP000001292">
    <property type="component" value="Unassembled WGS sequence"/>
</dbReference>
<dbReference type="GO" id="GO:0005739">
    <property type="term" value="C:mitochondrion"/>
    <property type="evidence" value="ECO:0007669"/>
    <property type="project" value="UniProtKB-SubCell"/>
</dbReference>
<dbReference type="GO" id="GO:0051539">
    <property type="term" value="F:4 iron, 4 sulfur cluster binding"/>
    <property type="evidence" value="ECO:0007669"/>
    <property type="project" value="UniProtKB-UniRule"/>
</dbReference>
<dbReference type="GO" id="GO:0016992">
    <property type="term" value="F:lipoate synthase activity"/>
    <property type="evidence" value="ECO:0007669"/>
    <property type="project" value="UniProtKB-UniRule"/>
</dbReference>
<dbReference type="GO" id="GO:0046872">
    <property type="term" value="F:metal ion binding"/>
    <property type="evidence" value="ECO:0007669"/>
    <property type="project" value="UniProtKB-KW"/>
</dbReference>
<dbReference type="CDD" id="cd01335">
    <property type="entry name" value="Radical_SAM"/>
    <property type="match status" value="1"/>
</dbReference>
<dbReference type="FunFam" id="3.20.20.70:FF:000036">
    <property type="entry name" value="Lipoyl synthase, mitochondrial"/>
    <property type="match status" value="1"/>
</dbReference>
<dbReference type="Gene3D" id="3.20.20.70">
    <property type="entry name" value="Aldolase class I"/>
    <property type="match status" value="1"/>
</dbReference>
<dbReference type="HAMAP" id="MF_00206">
    <property type="entry name" value="Lipoyl_synth"/>
    <property type="match status" value="1"/>
</dbReference>
<dbReference type="InterPro" id="IPR013785">
    <property type="entry name" value="Aldolase_TIM"/>
</dbReference>
<dbReference type="InterPro" id="IPR006638">
    <property type="entry name" value="Elp3/MiaA/NifB-like_rSAM"/>
</dbReference>
<dbReference type="InterPro" id="IPR031691">
    <property type="entry name" value="LIAS_N"/>
</dbReference>
<dbReference type="InterPro" id="IPR003698">
    <property type="entry name" value="Lipoyl_synth"/>
</dbReference>
<dbReference type="InterPro" id="IPR007197">
    <property type="entry name" value="rSAM"/>
</dbReference>
<dbReference type="NCBIfam" id="TIGR00510">
    <property type="entry name" value="lipA"/>
    <property type="match status" value="1"/>
</dbReference>
<dbReference type="NCBIfam" id="NF004019">
    <property type="entry name" value="PRK05481.1"/>
    <property type="match status" value="1"/>
</dbReference>
<dbReference type="NCBIfam" id="NF009544">
    <property type="entry name" value="PRK12928.1"/>
    <property type="match status" value="1"/>
</dbReference>
<dbReference type="PANTHER" id="PTHR10949">
    <property type="entry name" value="LIPOYL SYNTHASE"/>
    <property type="match status" value="1"/>
</dbReference>
<dbReference type="PANTHER" id="PTHR10949:SF0">
    <property type="entry name" value="LIPOYL SYNTHASE, MITOCHONDRIAL"/>
    <property type="match status" value="1"/>
</dbReference>
<dbReference type="Pfam" id="PF16881">
    <property type="entry name" value="LIAS_N"/>
    <property type="match status" value="1"/>
</dbReference>
<dbReference type="Pfam" id="PF04055">
    <property type="entry name" value="Radical_SAM"/>
    <property type="match status" value="1"/>
</dbReference>
<dbReference type="PIRSF" id="PIRSF005963">
    <property type="entry name" value="Lipoyl_synth"/>
    <property type="match status" value="1"/>
</dbReference>
<dbReference type="SFLD" id="SFLDF00271">
    <property type="entry name" value="lipoyl_synthase"/>
    <property type="match status" value="1"/>
</dbReference>
<dbReference type="SFLD" id="SFLDS00029">
    <property type="entry name" value="Radical_SAM"/>
    <property type="match status" value="1"/>
</dbReference>
<dbReference type="SMART" id="SM00729">
    <property type="entry name" value="Elp3"/>
    <property type="match status" value="1"/>
</dbReference>
<dbReference type="SUPFAM" id="SSF102114">
    <property type="entry name" value="Radical SAM enzymes"/>
    <property type="match status" value="1"/>
</dbReference>
<dbReference type="PROSITE" id="PS51918">
    <property type="entry name" value="RADICAL_SAM"/>
    <property type="match status" value="1"/>
</dbReference>
<feature type="chain" id="PRO_0000398222" description="Lipoyl synthase, mitochondrial">
    <location>
        <begin position="1"/>
        <end position="377"/>
    </location>
</feature>
<feature type="domain" description="Radical SAM core" evidence="2">
    <location>
        <begin position="119"/>
        <end position="338"/>
    </location>
</feature>
<feature type="binding site" evidence="1">
    <location>
        <position position="103"/>
    </location>
    <ligand>
        <name>[4Fe-4S] cluster</name>
        <dbReference type="ChEBI" id="CHEBI:49883"/>
        <label>1</label>
    </ligand>
</feature>
<feature type="binding site" evidence="1">
    <location>
        <position position="108"/>
    </location>
    <ligand>
        <name>[4Fe-4S] cluster</name>
        <dbReference type="ChEBI" id="CHEBI:49883"/>
        <label>1</label>
    </ligand>
</feature>
<feature type="binding site" evidence="1">
    <location>
        <position position="114"/>
    </location>
    <ligand>
        <name>[4Fe-4S] cluster</name>
        <dbReference type="ChEBI" id="CHEBI:49883"/>
        <label>1</label>
    </ligand>
</feature>
<feature type="binding site" evidence="1">
    <location>
        <position position="134"/>
    </location>
    <ligand>
        <name>[4Fe-4S] cluster</name>
        <dbReference type="ChEBI" id="CHEBI:49883"/>
        <label>2</label>
        <note>4Fe-4S-S-AdoMet</note>
    </ligand>
</feature>
<feature type="binding site" evidence="1">
    <location>
        <position position="138"/>
    </location>
    <ligand>
        <name>[4Fe-4S] cluster</name>
        <dbReference type="ChEBI" id="CHEBI:49883"/>
        <label>2</label>
        <note>4Fe-4S-S-AdoMet</note>
    </ligand>
</feature>
<feature type="binding site" evidence="1">
    <location>
        <position position="141"/>
    </location>
    <ligand>
        <name>[4Fe-4S] cluster</name>
        <dbReference type="ChEBI" id="CHEBI:49883"/>
        <label>2</label>
        <note>4Fe-4S-S-AdoMet</note>
    </ligand>
</feature>
<feature type="binding site" evidence="1">
    <location>
        <position position="349"/>
    </location>
    <ligand>
        <name>[4Fe-4S] cluster</name>
        <dbReference type="ChEBI" id="CHEBI:49883"/>
        <label>1</label>
    </ligand>
</feature>
<organism>
    <name type="scientific">Drosophila sechellia</name>
    <name type="common">Fruit fly</name>
    <dbReference type="NCBI Taxonomy" id="7238"/>
    <lineage>
        <taxon>Eukaryota</taxon>
        <taxon>Metazoa</taxon>
        <taxon>Ecdysozoa</taxon>
        <taxon>Arthropoda</taxon>
        <taxon>Hexapoda</taxon>
        <taxon>Insecta</taxon>
        <taxon>Pterygota</taxon>
        <taxon>Neoptera</taxon>
        <taxon>Endopterygota</taxon>
        <taxon>Diptera</taxon>
        <taxon>Brachycera</taxon>
        <taxon>Muscomorpha</taxon>
        <taxon>Ephydroidea</taxon>
        <taxon>Drosophilidae</taxon>
        <taxon>Drosophila</taxon>
        <taxon>Sophophora</taxon>
    </lineage>
</organism>
<protein>
    <recommendedName>
        <fullName evidence="1">Lipoyl synthase, mitochondrial</fullName>
        <ecNumber evidence="1">2.8.1.8</ecNumber>
    </recommendedName>
    <alternativeName>
        <fullName evidence="1">Lipoate synthase</fullName>
        <shortName evidence="1">LS</shortName>
        <shortName evidence="1">Lip-syn</shortName>
    </alternativeName>
    <alternativeName>
        <fullName evidence="1">Lipoic acid synthase</fullName>
    </alternativeName>
</protein>
<keyword id="KW-0004">4Fe-4S</keyword>
<keyword id="KW-0408">Iron</keyword>
<keyword id="KW-0411">Iron-sulfur</keyword>
<keyword id="KW-0479">Metal-binding</keyword>
<keyword id="KW-0496">Mitochondrion</keyword>
<keyword id="KW-1185">Reference proteome</keyword>
<keyword id="KW-0949">S-adenosyl-L-methionine</keyword>
<keyword id="KW-0808">Transferase</keyword>
<name>LIAS_DROSE</name>
<sequence length="377" mass="42683">MLRALKTHVEAPIVVATRAASTNAEKLEEIRERLAKGPNFQDFVQNPDNTRSEWEQYDGKLRREKGEEQRLRLPPWLKTTIPVGKNYAKIKAQMRELKLSTVCEEARCPNIGECWGGGEHGTQTATIMLMGDTCTRGCRFCSVKTARKPPPLDVNEPVNTATAIASWGLDYIVLTSVDRDDLPDGGSKHIAETVREIKARNSNIFVECLVPDFRGNLECVETIANSGLDVYAHNIETVEKLTPYVRDRRAHYRQTLQVLTEAKRFNPNLITKSSIMLGLGETDEEIENTLKDLREAGVDCVTLGQYMQPTNKHLKVIEYVTPEKFKHWEERGNELGFLYTASGPLVRSSYKAGEFFITSILENRKKRQNATEVPKEQ</sequence>
<accession>B4IAA7</accession>
<proteinExistence type="inferred from homology"/>